<proteinExistence type="inferred from homology"/>
<gene>
    <name evidence="1" type="primary">proS</name>
    <name type="ordered locus">BamMC406_0515</name>
</gene>
<accession>B1YSV1</accession>
<organism>
    <name type="scientific">Burkholderia ambifaria (strain MC40-6)</name>
    <dbReference type="NCBI Taxonomy" id="398577"/>
    <lineage>
        <taxon>Bacteria</taxon>
        <taxon>Pseudomonadati</taxon>
        <taxon>Pseudomonadota</taxon>
        <taxon>Betaproteobacteria</taxon>
        <taxon>Burkholderiales</taxon>
        <taxon>Burkholderiaceae</taxon>
        <taxon>Burkholderia</taxon>
        <taxon>Burkholderia cepacia complex</taxon>
    </lineage>
</organism>
<evidence type="ECO:0000255" key="1">
    <source>
        <dbReference type="HAMAP-Rule" id="MF_01569"/>
    </source>
</evidence>
<reference key="1">
    <citation type="submission" date="2008-04" db="EMBL/GenBank/DDBJ databases">
        <title>Complete sequence of chromosome 1 of Burkholderia ambifaria MC40-6.</title>
        <authorList>
            <person name="Copeland A."/>
            <person name="Lucas S."/>
            <person name="Lapidus A."/>
            <person name="Glavina del Rio T."/>
            <person name="Dalin E."/>
            <person name="Tice H."/>
            <person name="Pitluck S."/>
            <person name="Chain P."/>
            <person name="Malfatti S."/>
            <person name="Shin M."/>
            <person name="Vergez L."/>
            <person name="Lang D."/>
            <person name="Schmutz J."/>
            <person name="Larimer F."/>
            <person name="Land M."/>
            <person name="Hauser L."/>
            <person name="Kyrpides N."/>
            <person name="Lykidis A."/>
            <person name="Ramette A."/>
            <person name="Konstantinidis K."/>
            <person name="Tiedje J."/>
            <person name="Richardson P."/>
        </authorList>
    </citation>
    <scope>NUCLEOTIDE SEQUENCE [LARGE SCALE GENOMIC DNA]</scope>
    <source>
        <strain>MC40-6</strain>
    </source>
</reference>
<dbReference type="EC" id="6.1.1.15" evidence="1"/>
<dbReference type="EMBL" id="CP001025">
    <property type="protein sequence ID" value="ACB63012.1"/>
    <property type="molecule type" value="Genomic_DNA"/>
</dbReference>
<dbReference type="RefSeq" id="WP_012363041.1">
    <property type="nucleotide sequence ID" value="NC_010551.1"/>
</dbReference>
<dbReference type="SMR" id="B1YSV1"/>
<dbReference type="KEGG" id="bac:BamMC406_0515"/>
<dbReference type="HOGENOM" id="CLU_016739_0_0_4"/>
<dbReference type="OrthoDB" id="9809052at2"/>
<dbReference type="Proteomes" id="UP000001680">
    <property type="component" value="Chromosome 1"/>
</dbReference>
<dbReference type="GO" id="GO:0005829">
    <property type="term" value="C:cytosol"/>
    <property type="evidence" value="ECO:0007669"/>
    <property type="project" value="TreeGrafter"/>
</dbReference>
<dbReference type="GO" id="GO:0002161">
    <property type="term" value="F:aminoacyl-tRNA deacylase activity"/>
    <property type="evidence" value="ECO:0007669"/>
    <property type="project" value="InterPro"/>
</dbReference>
<dbReference type="GO" id="GO:0005524">
    <property type="term" value="F:ATP binding"/>
    <property type="evidence" value="ECO:0007669"/>
    <property type="project" value="UniProtKB-UniRule"/>
</dbReference>
<dbReference type="GO" id="GO:0004827">
    <property type="term" value="F:proline-tRNA ligase activity"/>
    <property type="evidence" value="ECO:0007669"/>
    <property type="project" value="UniProtKB-UniRule"/>
</dbReference>
<dbReference type="GO" id="GO:0006433">
    <property type="term" value="P:prolyl-tRNA aminoacylation"/>
    <property type="evidence" value="ECO:0007669"/>
    <property type="project" value="UniProtKB-UniRule"/>
</dbReference>
<dbReference type="CDD" id="cd04334">
    <property type="entry name" value="ProRS-INS"/>
    <property type="match status" value="1"/>
</dbReference>
<dbReference type="CDD" id="cd00861">
    <property type="entry name" value="ProRS_anticodon_short"/>
    <property type="match status" value="1"/>
</dbReference>
<dbReference type="CDD" id="cd00779">
    <property type="entry name" value="ProRS_core_prok"/>
    <property type="match status" value="1"/>
</dbReference>
<dbReference type="FunFam" id="3.30.930.10:FF:000043">
    <property type="entry name" value="Proline--tRNA ligase"/>
    <property type="match status" value="1"/>
</dbReference>
<dbReference type="FunFam" id="3.30.930.10:FF:000097">
    <property type="entry name" value="Proline--tRNA ligase"/>
    <property type="match status" value="1"/>
</dbReference>
<dbReference type="Gene3D" id="3.40.50.800">
    <property type="entry name" value="Anticodon-binding domain"/>
    <property type="match status" value="1"/>
</dbReference>
<dbReference type="Gene3D" id="3.30.930.10">
    <property type="entry name" value="Bira Bifunctional Protein, Domain 2"/>
    <property type="match status" value="2"/>
</dbReference>
<dbReference type="Gene3D" id="3.90.960.10">
    <property type="entry name" value="YbaK/aminoacyl-tRNA synthetase-associated domain"/>
    <property type="match status" value="1"/>
</dbReference>
<dbReference type="HAMAP" id="MF_01569">
    <property type="entry name" value="Pro_tRNA_synth_type1"/>
    <property type="match status" value="1"/>
</dbReference>
<dbReference type="InterPro" id="IPR002314">
    <property type="entry name" value="aa-tRNA-synt_IIb"/>
</dbReference>
<dbReference type="InterPro" id="IPR006195">
    <property type="entry name" value="aa-tRNA-synth_II"/>
</dbReference>
<dbReference type="InterPro" id="IPR045864">
    <property type="entry name" value="aa-tRNA-synth_II/BPL/LPL"/>
</dbReference>
<dbReference type="InterPro" id="IPR004154">
    <property type="entry name" value="Anticodon-bd"/>
</dbReference>
<dbReference type="InterPro" id="IPR036621">
    <property type="entry name" value="Anticodon-bd_dom_sf"/>
</dbReference>
<dbReference type="InterPro" id="IPR002316">
    <property type="entry name" value="Pro-tRNA-ligase_IIa"/>
</dbReference>
<dbReference type="InterPro" id="IPR004500">
    <property type="entry name" value="Pro-tRNA-synth_IIa_bac-type"/>
</dbReference>
<dbReference type="InterPro" id="IPR023717">
    <property type="entry name" value="Pro-tRNA-Synthase_IIa_type1"/>
</dbReference>
<dbReference type="InterPro" id="IPR050062">
    <property type="entry name" value="Pro-tRNA_synthetase"/>
</dbReference>
<dbReference type="InterPro" id="IPR044140">
    <property type="entry name" value="ProRS_anticodon_short"/>
</dbReference>
<dbReference type="InterPro" id="IPR033730">
    <property type="entry name" value="ProRS_core_prok"/>
</dbReference>
<dbReference type="InterPro" id="IPR036754">
    <property type="entry name" value="YbaK/aa-tRNA-synt-asso_dom_sf"/>
</dbReference>
<dbReference type="InterPro" id="IPR007214">
    <property type="entry name" value="YbaK/aa-tRNA-synth-assoc-dom"/>
</dbReference>
<dbReference type="NCBIfam" id="NF006625">
    <property type="entry name" value="PRK09194.1"/>
    <property type="match status" value="1"/>
</dbReference>
<dbReference type="NCBIfam" id="TIGR00409">
    <property type="entry name" value="proS_fam_II"/>
    <property type="match status" value="1"/>
</dbReference>
<dbReference type="PANTHER" id="PTHR42753">
    <property type="entry name" value="MITOCHONDRIAL RIBOSOME PROTEIN L39/PROLYL-TRNA LIGASE FAMILY MEMBER"/>
    <property type="match status" value="1"/>
</dbReference>
<dbReference type="PANTHER" id="PTHR42753:SF2">
    <property type="entry name" value="PROLINE--TRNA LIGASE"/>
    <property type="match status" value="1"/>
</dbReference>
<dbReference type="Pfam" id="PF03129">
    <property type="entry name" value="HGTP_anticodon"/>
    <property type="match status" value="1"/>
</dbReference>
<dbReference type="Pfam" id="PF00587">
    <property type="entry name" value="tRNA-synt_2b"/>
    <property type="match status" value="1"/>
</dbReference>
<dbReference type="Pfam" id="PF04073">
    <property type="entry name" value="tRNA_edit"/>
    <property type="match status" value="1"/>
</dbReference>
<dbReference type="PIRSF" id="PIRSF001535">
    <property type="entry name" value="ProRS_1"/>
    <property type="match status" value="1"/>
</dbReference>
<dbReference type="PRINTS" id="PR01046">
    <property type="entry name" value="TRNASYNTHPRO"/>
</dbReference>
<dbReference type="SUPFAM" id="SSF52954">
    <property type="entry name" value="Class II aaRS ABD-related"/>
    <property type="match status" value="1"/>
</dbReference>
<dbReference type="SUPFAM" id="SSF55681">
    <property type="entry name" value="Class II aaRS and biotin synthetases"/>
    <property type="match status" value="1"/>
</dbReference>
<dbReference type="SUPFAM" id="SSF55826">
    <property type="entry name" value="YbaK/ProRS associated domain"/>
    <property type="match status" value="1"/>
</dbReference>
<dbReference type="PROSITE" id="PS50862">
    <property type="entry name" value="AA_TRNA_LIGASE_II"/>
    <property type="match status" value="1"/>
</dbReference>
<feature type="chain" id="PRO_1000199357" description="Proline--tRNA ligase">
    <location>
        <begin position="1"/>
        <end position="578"/>
    </location>
</feature>
<protein>
    <recommendedName>
        <fullName evidence="1">Proline--tRNA ligase</fullName>
        <ecNumber evidence="1">6.1.1.15</ecNumber>
    </recommendedName>
    <alternativeName>
        <fullName evidence="1">Prolyl-tRNA synthetase</fullName>
        <shortName evidence="1">ProRS</shortName>
    </alternativeName>
</protein>
<comment type="function">
    <text evidence="1">Catalyzes the attachment of proline to tRNA(Pro) in a two-step reaction: proline is first activated by ATP to form Pro-AMP and then transferred to the acceptor end of tRNA(Pro). As ProRS can inadvertently accommodate and process non-cognate amino acids such as alanine and cysteine, to avoid such errors it has two additional distinct editing activities against alanine. One activity is designated as 'pretransfer' editing and involves the tRNA(Pro)-independent hydrolysis of activated Ala-AMP. The other activity is designated 'posttransfer' editing and involves deacylation of mischarged Ala-tRNA(Pro). The misacylated Cys-tRNA(Pro) is not edited by ProRS.</text>
</comment>
<comment type="catalytic activity">
    <reaction evidence="1">
        <text>tRNA(Pro) + L-proline + ATP = L-prolyl-tRNA(Pro) + AMP + diphosphate</text>
        <dbReference type="Rhea" id="RHEA:14305"/>
        <dbReference type="Rhea" id="RHEA-COMP:9700"/>
        <dbReference type="Rhea" id="RHEA-COMP:9702"/>
        <dbReference type="ChEBI" id="CHEBI:30616"/>
        <dbReference type="ChEBI" id="CHEBI:33019"/>
        <dbReference type="ChEBI" id="CHEBI:60039"/>
        <dbReference type="ChEBI" id="CHEBI:78442"/>
        <dbReference type="ChEBI" id="CHEBI:78532"/>
        <dbReference type="ChEBI" id="CHEBI:456215"/>
        <dbReference type="EC" id="6.1.1.15"/>
    </reaction>
</comment>
<comment type="subunit">
    <text evidence="1">Homodimer.</text>
</comment>
<comment type="subcellular location">
    <subcellularLocation>
        <location evidence="1">Cytoplasm</location>
    </subcellularLocation>
</comment>
<comment type="domain">
    <text evidence="1">Consists of three domains: the N-terminal catalytic domain, the editing domain and the C-terminal anticodon-binding domain.</text>
</comment>
<comment type="similarity">
    <text evidence="1">Belongs to the class-II aminoacyl-tRNA synthetase family. ProS type 1 subfamily.</text>
</comment>
<keyword id="KW-0030">Aminoacyl-tRNA synthetase</keyword>
<keyword id="KW-0067">ATP-binding</keyword>
<keyword id="KW-0963">Cytoplasm</keyword>
<keyword id="KW-0436">Ligase</keyword>
<keyword id="KW-0547">Nucleotide-binding</keyword>
<keyword id="KW-0648">Protein biosynthesis</keyword>
<name>SYP_BURA4</name>
<sequence length="578" mass="63872">MKASRFFIGTLKEAPADAEIVSHKLMVRAGMIRRVAGGIYNYLPVGLRSIRKVEAIVREEMNRAGAIELLMPAVQPAELWQESGRWEQYGPELLRFKDRKDNDFVIGPTHEEVVTDIARNQIKSYRQMPVNFYQIQTKFRDEIRPRFGVMRGREFIMKDAYSFDKDTAGLNESYRKMYDAYVRIFTRLGLEFRAVAADSGSIGGNFSHEFHVIADTGEDAIAYCPTSDFAANIEAAEALPLIAARAAPAEAMEKVATPGKAKCEAVAELLAIPLERTIKSIVLATENEGAEPTIWLIMLRGDHDLNEIKVSKLPGLKNHRFATEQEIVDWFGTPPGYLGPVGTKKPVKVIADRTVANMSDFVVGANEVDYHIAGVNWGRDLPEPEVADVRDVKKGDPSPDGKGTIDICRGIEVGHVFQLGTKYSEAMGATFLDESGKPQPMLMGCYGVGVTRILGAAIEQNFDDRGIIWPESIAPFEVVLCPMGYDRSDMVREAADKLYAELAAAGIDVILDDRGERPGVMFADWELIGVPHRLVIGERGLKEGKIEYQGRRDAEATLLPADEAAATVTEKIRAALAH</sequence>